<comment type="function">
    <text evidence="1">This protein is one of the early assembly proteins of the 50S ribosomal subunit, although it is not seen to bind rRNA by itself. It is important during the early stages of 50S assembly.</text>
</comment>
<comment type="subunit">
    <text evidence="1">Part of the 50S ribosomal subunit.</text>
</comment>
<comment type="similarity">
    <text evidence="1">Belongs to the universal ribosomal protein uL13 family.</text>
</comment>
<sequence>MRTTFMAKANEVERKWYVVDAEGQTLGRLASEVASILRGKNKPTFTPHVDTGDHVIIINAEKIHLTGNKLNDKIYYRHTNHPGGLKQRTALEMRTNYPVQMLELAIKGMLPKGRLGRQVSKKLNVYAGAEHPHQAQKPEVYELRG</sequence>
<name>RL13_BACHK</name>
<evidence type="ECO:0000255" key="1">
    <source>
        <dbReference type="HAMAP-Rule" id="MF_01366"/>
    </source>
</evidence>
<evidence type="ECO:0000305" key="2"/>
<gene>
    <name evidence="1" type="primary">rplM</name>
    <name type="ordered locus">BT9727_0138</name>
</gene>
<organism>
    <name type="scientific">Bacillus thuringiensis subsp. konkukian (strain 97-27)</name>
    <dbReference type="NCBI Taxonomy" id="281309"/>
    <lineage>
        <taxon>Bacteria</taxon>
        <taxon>Bacillati</taxon>
        <taxon>Bacillota</taxon>
        <taxon>Bacilli</taxon>
        <taxon>Bacillales</taxon>
        <taxon>Bacillaceae</taxon>
        <taxon>Bacillus</taxon>
        <taxon>Bacillus cereus group</taxon>
    </lineage>
</organism>
<accession>Q6HPM6</accession>
<feature type="chain" id="PRO_0000261688" description="Large ribosomal subunit protein uL13">
    <location>
        <begin position="1"/>
        <end position="145"/>
    </location>
</feature>
<keyword id="KW-0687">Ribonucleoprotein</keyword>
<keyword id="KW-0689">Ribosomal protein</keyword>
<proteinExistence type="inferred from homology"/>
<reference key="1">
    <citation type="journal article" date="2006" name="J. Bacteriol.">
        <title>Pathogenomic sequence analysis of Bacillus cereus and Bacillus thuringiensis isolates closely related to Bacillus anthracis.</title>
        <authorList>
            <person name="Han C.S."/>
            <person name="Xie G."/>
            <person name="Challacombe J.F."/>
            <person name="Altherr M.R."/>
            <person name="Bhotika S.S."/>
            <person name="Bruce D."/>
            <person name="Campbell C.S."/>
            <person name="Campbell M.L."/>
            <person name="Chen J."/>
            <person name="Chertkov O."/>
            <person name="Cleland C."/>
            <person name="Dimitrijevic M."/>
            <person name="Doggett N.A."/>
            <person name="Fawcett J.J."/>
            <person name="Glavina T."/>
            <person name="Goodwin L.A."/>
            <person name="Hill K.K."/>
            <person name="Hitchcock P."/>
            <person name="Jackson P.J."/>
            <person name="Keim P."/>
            <person name="Kewalramani A.R."/>
            <person name="Longmire J."/>
            <person name="Lucas S."/>
            <person name="Malfatti S."/>
            <person name="McMurry K."/>
            <person name="Meincke L.J."/>
            <person name="Misra M."/>
            <person name="Moseman B.L."/>
            <person name="Mundt M."/>
            <person name="Munk A.C."/>
            <person name="Okinaka R.T."/>
            <person name="Parson-Quintana B."/>
            <person name="Reilly L.P."/>
            <person name="Richardson P."/>
            <person name="Robinson D.L."/>
            <person name="Rubin E."/>
            <person name="Saunders E."/>
            <person name="Tapia R."/>
            <person name="Tesmer J.G."/>
            <person name="Thayer N."/>
            <person name="Thompson L.S."/>
            <person name="Tice H."/>
            <person name="Ticknor L.O."/>
            <person name="Wills P.L."/>
            <person name="Brettin T.S."/>
            <person name="Gilna P."/>
        </authorList>
    </citation>
    <scope>NUCLEOTIDE SEQUENCE [LARGE SCALE GENOMIC DNA]</scope>
    <source>
        <strain>97-27</strain>
    </source>
</reference>
<dbReference type="EMBL" id="AE017355">
    <property type="protein sequence ID" value="AAT63889.1"/>
    <property type="molecule type" value="Genomic_DNA"/>
</dbReference>
<dbReference type="RefSeq" id="WP_001260793.1">
    <property type="nucleotide sequence ID" value="NC_005957.1"/>
</dbReference>
<dbReference type="RefSeq" id="YP_034494.1">
    <property type="nucleotide sequence ID" value="NC_005957.1"/>
</dbReference>
<dbReference type="SMR" id="Q6HPM6"/>
<dbReference type="GeneID" id="93010910"/>
<dbReference type="KEGG" id="btk:BT9727_0138"/>
<dbReference type="PATRIC" id="fig|281309.8.peg.140"/>
<dbReference type="HOGENOM" id="CLU_082184_2_2_9"/>
<dbReference type="Proteomes" id="UP000001301">
    <property type="component" value="Chromosome"/>
</dbReference>
<dbReference type="GO" id="GO:0022625">
    <property type="term" value="C:cytosolic large ribosomal subunit"/>
    <property type="evidence" value="ECO:0007669"/>
    <property type="project" value="TreeGrafter"/>
</dbReference>
<dbReference type="GO" id="GO:0003729">
    <property type="term" value="F:mRNA binding"/>
    <property type="evidence" value="ECO:0007669"/>
    <property type="project" value="TreeGrafter"/>
</dbReference>
<dbReference type="GO" id="GO:0003735">
    <property type="term" value="F:structural constituent of ribosome"/>
    <property type="evidence" value="ECO:0007669"/>
    <property type="project" value="InterPro"/>
</dbReference>
<dbReference type="GO" id="GO:0017148">
    <property type="term" value="P:negative regulation of translation"/>
    <property type="evidence" value="ECO:0007669"/>
    <property type="project" value="TreeGrafter"/>
</dbReference>
<dbReference type="GO" id="GO:0006412">
    <property type="term" value="P:translation"/>
    <property type="evidence" value="ECO:0007669"/>
    <property type="project" value="UniProtKB-UniRule"/>
</dbReference>
<dbReference type="CDD" id="cd00392">
    <property type="entry name" value="Ribosomal_L13"/>
    <property type="match status" value="1"/>
</dbReference>
<dbReference type="FunFam" id="3.90.1180.10:FF:000001">
    <property type="entry name" value="50S ribosomal protein L13"/>
    <property type="match status" value="1"/>
</dbReference>
<dbReference type="Gene3D" id="3.90.1180.10">
    <property type="entry name" value="Ribosomal protein L13"/>
    <property type="match status" value="1"/>
</dbReference>
<dbReference type="HAMAP" id="MF_01366">
    <property type="entry name" value="Ribosomal_uL13"/>
    <property type="match status" value="1"/>
</dbReference>
<dbReference type="InterPro" id="IPR005822">
    <property type="entry name" value="Ribosomal_uL13"/>
</dbReference>
<dbReference type="InterPro" id="IPR005823">
    <property type="entry name" value="Ribosomal_uL13_bac-type"/>
</dbReference>
<dbReference type="InterPro" id="IPR023563">
    <property type="entry name" value="Ribosomal_uL13_CS"/>
</dbReference>
<dbReference type="InterPro" id="IPR036899">
    <property type="entry name" value="Ribosomal_uL13_sf"/>
</dbReference>
<dbReference type="NCBIfam" id="TIGR01066">
    <property type="entry name" value="rplM_bact"/>
    <property type="match status" value="1"/>
</dbReference>
<dbReference type="PANTHER" id="PTHR11545:SF2">
    <property type="entry name" value="LARGE RIBOSOMAL SUBUNIT PROTEIN UL13M"/>
    <property type="match status" value="1"/>
</dbReference>
<dbReference type="PANTHER" id="PTHR11545">
    <property type="entry name" value="RIBOSOMAL PROTEIN L13"/>
    <property type="match status" value="1"/>
</dbReference>
<dbReference type="Pfam" id="PF00572">
    <property type="entry name" value="Ribosomal_L13"/>
    <property type="match status" value="1"/>
</dbReference>
<dbReference type="PIRSF" id="PIRSF002181">
    <property type="entry name" value="Ribosomal_L13"/>
    <property type="match status" value="1"/>
</dbReference>
<dbReference type="SUPFAM" id="SSF52161">
    <property type="entry name" value="Ribosomal protein L13"/>
    <property type="match status" value="1"/>
</dbReference>
<dbReference type="PROSITE" id="PS00783">
    <property type="entry name" value="RIBOSOMAL_L13"/>
    <property type="match status" value="1"/>
</dbReference>
<protein>
    <recommendedName>
        <fullName evidence="1">Large ribosomal subunit protein uL13</fullName>
    </recommendedName>
    <alternativeName>
        <fullName evidence="2">50S ribosomal protein L13</fullName>
    </alternativeName>
</protein>